<protein>
    <recommendedName>
        <fullName evidence="2">Non-selective voltage-gated ion channel VDAC2</fullName>
        <shortName evidence="2">VDAC-2</shortName>
    </recommendedName>
    <alternativeName>
        <fullName evidence="2">Outer mitochondrial membrane protein porin 2</fullName>
    </alternativeName>
</protein>
<dbReference type="RefSeq" id="XP_005083579.1">
    <property type="nucleotide sequence ID" value="XM_005083522.2"/>
</dbReference>
<dbReference type="SMR" id="P86223"/>
<dbReference type="STRING" id="10036.ENSMAUP00000005087"/>
<dbReference type="Ensembl" id="ENSMAUT00000008389">
    <property type="protein sequence ID" value="ENSMAUP00000005087"/>
    <property type="gene ID" value="ENSMAUG00000006909"/>
</dbReference>
<dbReference type="eggNOG" id="KOG3126">
    <property type="taxonomic scope" value="Eukaryota"/>
</dbReference>
<dbReference type="OrthoDB" id="7827681at2759"/>
<dbReference type="Proteomes" id="UP000189706">
    <property type="component" value="Unplaced"/>
</dbReference>
<dbReference type="GO" id="GO:0001669">
    <property type="term" value="C:acrosomal vesicle"/>
    <property type="evidence" value="ECO:0007669"/>
    <property type="project" value="Ensembl"/>
</dbReference>
<dbReference type="GO" id="GO:0016020">
    <property type="term" value="C:membrane"/>
    <property type="evidence" value="ECO:0000250"/>
    <property type="project" value="UniProtKB"/>
</dbReference>
<dbReference type="GO" id="GO:0042645">
    <property type="term" value="C:mitochondrial nucleoid"/>
    <property type="evidence" value="ECO:0007669"/>
    <property type="project" value="Ensembl"/>
</dbReference>
<dbReference type="GO" id="GO:0005741">
    <property type="term" value="C:mitochondrial outer membrane"/>
    <property type="evidence" value="ECO:0000250"/>
    <property type="project" value="UniProtKB"/>
</dbReference>
<dbReference type="GO" id="GO:0005739">
    <property type="term" value="C:mitochondrion"/>
    <property type="evidence" value="ECO:0000250"/>
    <property type="project" value="UniProtKB"/>
</dbReference>
<dbReference type="GO" id="GO:0046930">
    <property type="term" value="C:pore complex"/>
    <property type="evidence" value="ECO:0007669"/>
    <property type="project" value="UniProtKB-KW"/>
</dbReference>
<dbReference type="GO" id="GO:0097225">
    <property type="term" value="C:sperm midpiece"/>
    <property type="evidence" value="ECO:0000250"/>
    <property type="project" value="UniProtKB"/>
</dbReference>
<dbReference type="GO" id="GO:0005524">
    <property type="term" value="F:ATP binding"/>
    <property type="evidence" value="ECO:0007669"/>
    <property type="project" value="UniProtKB-KW"/>
</dbReference>
<dbReference type="GO" id="GO:0097001">
    <property type="term" value="F:ceramide binding"/>
    <property type="evidence" value="ECO:0000250"/>
    <property type="project" value="UniProtKB"/>
</dbReference>
<dbReference type="GO" id="GO:0015485">
    <property type="term" value="F:cholesterol binding"/>
    <property type="evidence" value="ECO:0000250"/>
    <property type="project" value="UniProtKB"/>
</dbReference>
<dbReference type="GO" id="GO:0008142">
    <property type="term" value="F:oxysterol binding"/>
    <property type="evidence" value="ECO:0000250"/>
    <property type="project" value="UniProtKB"/>
</dbReference>
<dbReference type="GO" id="GO:0031210">
    <property type="term" value="F:phosphatidylcholine binding"/>
    <property type="evidence" value="ECO:0000250"/>
    <property type="project" value="UniProtKB"/>
</dbReference>
<dbReference type="GO" id="GO:0017128">
    <property type="term" value="F:phospholipid scramblase activity"/>
    <property type="evidence" value="ECO:0007669"/>
    <property type="project" value="Ensembl"/>
</dbReference>
<dbReference type="GO" id="GO:0015288">
    <property type="term" value="F:porin activity"/>
    <property type="evidence" value="ECO:0007669"/>
    <property type="project" value="UniProtKB-KW"/>
</dbReference>
<dbReference type="GO" id="GO:0008308">
    <property type="term" value="F:voltage-gated monoatomic anion channel activity"/>
    <property type="evidence" value="ECO:0007669"/>
    <property type="project" value="Ensembl"/>
</dbReference>
<dbReference type="GO" id="GO:0005244">
    <property type="term" value="F:voltage-gated monoatomic ion channel activity"/>
    <property type="evidence" value="ECO:0000250"/>
    <property type="project" value="UniProtKB"/>
</dbReference>
<dbReference type="GO" id="GO:0007339">
    <property type="term" value="P:binding of sperm to zona pellucida"/>
    <property type="evidence" value="ECO:0007669"/>
    <property type="project" value="Ensembl"/>
</dbReference>
<dbReference type="GO" id="GO:0097345">
    <property type="term" value="P:mitochondrial outer membrane permeabilization"/>
    <property type="evidence" value="ECO:0000250"/>
    <property type="project" value="UniProtKB"/>
</dbReference>
<dbReference type="GO" id="GO:1990542">
    <property type="term" value="P:mitochondrial transmembrane transport"/>
    <property type="evidence" value="ECO:0007669"/>
    <property type="project" value="Ensembl"/>
</dbReference>
<dbReference type="GO" id="GO:0006820">
    <property type="term" value="P:monoatomic anion transport"/>
    <property type="evidence" value="ECO:0000250"/>
    <property type="project" value="UniProtKB"/>
</dbReference>
<dbReference type="CDD" id="cd07306">
    <property type="entry name" value="Porin3_VDAC"/>
    <property type="match status" value="1"/>
</dbReference>
<dbReference type="FunFam" id="2.40.160.10:FF:000001">
    <property type="entry name" value="Voltage-dependent anion-selective channel protein 2"/>
    <property type="match status" value="1"/>
</dbReference>
<dbReference type="Gene3D" id="2.40.160.10">
    <property type="entry name" value="Porin"/>
    <property type="match status" value="1"/>
</dbReference>
<dbReference type="InterPro" id="IPR023614">
    <property type="entry name" value="Porin_dom_sf"/>
</dbReference>
<dbReference type="InterPro" id="IPR001925">
    <property type="entry name" value="Porin_Euk"/>
</dbReference>
<dbReference type="InterPro" id="IPR027246">
    <property type="entry name" value="Porin_Euk/Tom40"/>
</dbReference>
<dbReference type="PANTHER" id="PTHR11743">
    <property type="entry name" value="VOLTAGE-DEPENDENT ANION-SELECTIVE CHANNEL"/>
    <property type="match status" value="1"/>
</dbReference>
<dbReference type="PANTHER" id="PTHR11743:SF12">
    <property type="entry name" value="VOLTAGE-DEPENDENT ANION-SELECTIVE CHANNEL PROTEIN 2"/>
    <property type="match status" value="1"/>
</dbReference>
<dbReference type="Pfam" id="PF01459">
    <property type="entry name" value="Porin_3"/>
    <property type="match status" value="1"/>
</dbReference>
<dbReference type="PRINTS" id="PR00185">
    <property type="entry name" value="EUKARYTPORIN"/>
</dbReference>
<dbReference type="PROSITE" id="PS00558">
    <property type="entry name" value="EUKARYOTIC_PORIN"/>
    <property type="match status" value="1"/>
</dbReference>
<sequence>MADCCVRTCPRPMCIPPSYADLGKAARDIFNKGFGFGLVKLDVKTKSCSGVEFSTSGSSNTDTGKVSGTLETKYKWCEYGLTFTEKWNTDNTLGTEIAIEDQICQGLKLTFDTTFSPNTGKKSGKIKSAYKRECINLGCDVDFDFAGPAIHGSAVFGYEGWLAGYQMTFDSAKSKLTRSNFAVGYRTGDFQLHTNVNNGTEFGGSIYQKVCEDFDTSVNLAWTSGTNCTRFGIAAKYQLDPTASISAKVNNSSLIGVGYTQTLRPGVKLTLSALVDGKSFNAGGHKLGLALELEA</sequence>
<name>VDAC2_MESAU</name>
<organism>
    <name type="scientific">Mesocricetus auratus</name>
    <name type="common">Golden hamster</name>
    <dbReference type="NCBI Taxonomy" id="10036"/>
    <lineage>
        <taxon>Eukaryota</taxon>
        <taxon>Metazoa</taxon>
        <taxon>Chordata</taxon>
        <taxon>Craniata</taxon>
        <taxon>Vertebrata</taxon>
        <taxon>Euteleostomi</taxon>
        <taxon>Mammalia</taxon>
        <taxon>Eutheria</taxon>
        <taxon>Euarchontoglires</taxon>
        <taxon>Glires</taxon>
        <taxon>Rodentia</taxon>
        <taxon>Myomorpha</taxon>
        <taxon>Muroidea</taxon>
        <taxon>Cricetidae</taxon>
        <taxon>Cricetinae</taxon>
        <taxon>Mesocricetus</taxon>
    </lineage>
</organism>
<gene>
    <name evidence="2" type="primary">VDAC2</name>
</gene>
<comment type="function">
    <text evidence="2 3">Non-selective voltage-gated ion channel that mediates the transport of anions and cations through the mitochondrion outer membrane and plasma membrane (By similarity). The channel adopts an open conformation at zero mV and a closed conformation at both positive and negative potentials (By similarity). There are two populations of channels; the main that functions in a lower open-state conductance with lower ion selectivity, that switch, in a voltage-dependent manner, from the open to a low-conducting 'closed' state and the other that has a normal ion selectivity in the typical high conductance, 'open' state (By similarity). Binds various lipids, including the sphingolipid ceramide, the phospholipid phosphatidylcholine, and the sterols cholesterol and oxysterol (By similarity). Binding of ceramide promotes the mitochondrial outer membrane permeabilization (MOMP) apoptotic pathway (By similarity).</text>
</comment>
<comment type="function">
    <text evidence="2">Catalyzes the scrambling of phospholipids across the outer mitochondrial membrane; the mechanism is unrelated to channel activity and is capable of translocating both anionic and zwitterionic phospholipids.</text>
</comment>
<comment type="catalytic activity">
    <reaction evidence="3">
        <text>chloride(in) = chloride(out)</text>
        <dbReference type="Rhea" id="RHEA:29823"/>
        <dbReference type="ChEBI" id="CHEBI:17996"/>
    </reaction>
</comment>
<comment type="catalytic activity">
    <reaction evidence="3">
        <text>K(+)(in) = K(+)(out)</text>
        <dbReference type="Rhea" id="RHEA:29463"/>
        <dbReference type="ChEBI" id="CHEBI:29103"/>
    </reaction>
</comment>
<comment type="catalytic activity">
    <reaction evidence="2">
        <text>a 1,2-diacyl-sn-glycero-3-phospho-L-serine(in) = a 1,2-diacyl-sn-glycero-3-phospho-L-serine(out)</text>
        <dbReference type="Rhea" id="RHEA:38663"/>
        <dbReference type="ChEBI" id="CHEBI:57262"/>
    </reaction>
</comment>
<comment type="catalytic activity">
    <reaction evidence="2">
        <text>a 1,2-diacyl-sn-glycero-3-phosphocholine(in) = a 1,2-diacyl-sn-glycero-3-phosphocholine(out)</text>
        <dbReference type="Rhea" id="RHEA:38571"/>
        <dbReference type="ChEBI" id="CHEBI:57643"/>
    </reaction>
</comment>
<comment type="catalytic activity">
    <reaction evidence="2">
        <text>a 1,2-diacyl-sn-glycero-3-phospho-(1D-myo-inositol)(in) = a 1,2-diacyl-sn-glycero-3-phospho-(1D-myo-inositol)(out)</text>
        <dbReference type="Rhea" id="RHEA:38691"/>
        <dbReference type="ChEBI" id="CHEBI:57880"/>
    </reaction>
</comment>
<comment type="subunit">
    <text evidence="2 3">Monomer, homodimer and higher order oligomers; formation of higher order structures is necessary for scramblase activity (By similarity). Interacts with ARMC12 in a TBC1D21-dependent manner (By similarity). Interacts with KLC3 (By similarity). Interacts with SPATA33 (By similarity). Interacts with PPP3CC in a SPATA33-dependent manner (By similarity).</text>
</comment>
<comment type="subcellular location">
    <subcellularLocation>
        <location evidence="2">Mitochondrion outer membrane</location>
    </subcellularLocation>
    <subcellularLocation>
        <location evidence="2">Membrane</location>
    </subcellularLocation>
    <text evidence="2">May localize to non-mitochondrial membranes.</text>
</comment>
<comment type="domain">
    <text evidence="1">Consists mainly of a membrane-spanning beta-barrel formed by 19 beta-strands.</text>
</comment>
<comment type="PTM">
    <text evidence="2">Ubiquitinated by PRKN during mitophagy, leading to its degradation and enhancement of mitophagy. Deubiquitinated by USP30.</text>
</comment>
<comment type="similarity">
    <text evidence="5">Belongs to the eukaryotic mitochondrial porin family.</text>
</comment>
<keyword id="KW-0007">Acetylation</keyword>
<keyword id="KW-0067">ATP-binding</keyword>
<keyword id="KW-0406">Ion transport</keyword>
<keyword id="KW-1017">Isopeptide bond</keyword>
<keyword id="KW-0445">Lipid transport</keyword>
<keyword id="KW-0446">Lipid-binding</keyword>
<keyword id="KW-0472">Membrane</keyword>
<keyword id="KW-0496">Mitochondrion</keyword>
<keyword id="KW-1000">Mitochondrion outer membrane</keyword>
<keyword id="KW-0520">NAD</keyword>
<keyword id="KW-0547">Nucleotide-binding</keyword>
<keyword id="KW-0597">Phosphoprotein</keyword>
<keyword id="KW-0626">Porin</keyword>
<keyword id="KW-1185">Reference proteome</keyword>
<keyword id="KW-0812">Transmembrane</keyword>
<keyword id="KW-1134">Transmembrane beta strand</keyword>
<keyword id="KW-0813">Transport</keyword>
<keyword id="KW-0832">Ubl conjugation</keyword>
<evidence type="ECO:0000250" key="1">
    <source>
        <dbReference type="UniProtKB" id="P21796"/>
    </source>
</evidence>
<evidence type="ECO:0000250" key="2">
    <source>
        <dbReference type="UniProtKB" id="P45880"/>
    </source>
</evidence>
<evidence type="ECO:0000250" key="3">
    <source>
        <dbReference type="UniProtKB" id="Q60930"/>
    </source>
</evidence>
<evidence type="ECO:0000250" key="4">
    <source>
        <dbReference type="UniProtKB" id="Q60932"/>
    </source>
</evidence>
<evidence type="ECO:0000255" key="5"/>
<reference key="1">
    <citation type="journal article" date="2010" name="Asian J. Androl.">
        <title>Glucose-regulated protein precursor (GRP78) and tumor rejection antigen (GP96) are unique to hamster caput epididymal spermatozoa.</title>
        <authorList>
            <person name="Kameshwari D.B."/>
            <person name="Bhande S."/>
            <person name="Sundaram C.S."/>
            <person name="Kota V."/>
            <person name="Siva A.B."/>
            <person name="Shivaji S."/>
        </authorList>
    </citation>
    <scope>IDENTIFICATION BY MASS SPECTROMETRY</scope>
</reference>
<feature type="chain" id="PRO_0000394307" description="Non-selective voltage-gated ion channel VDAC2">
    <location>
        <begin position="1"/>
        <end position="295"/>
    </location>
</feature>
<feature type="transmembrane region" description="Beta stranded" evidence="1">
    <location>
        <begin position="38"/>
        <end position="47"/>
    </location>
</feature>
<feature type="transmembrane region" description="Beta stranded" evidence="1">
    <location>
        <begin position="51"/>
        <end position="59"/>
    </location>
</feature>
<feature type="transmembrane region" description="Beta stranded" evidence="1">
    <location>
        <begin position="66"/>
        <end position="76"/>
    </location>
</feature>
<feature type="transmembrane region" description="Beta stranded" evidence="1">
    <location>
        <begin position="81"/>
        <end position="88"/>
    </location>
</feature>
<feature type="transmembrane region" description="Beta stranded" evidence="1">
    <location>
        <begin position="92"/>
        <end position="101"/>
    </location>
</feature>
<feature type="transmembrane region" description="Beta stranded" evidence="1">
    <location>
        <begin position="107"/>
        <end position="116"/>
    </location>
</feature>
<feature type="transmembrane region" description="Beta stranded" evidence="1">
    <location>
        <begin position="123"/>
        <end position="132"/>
    </location>
</feature>
<feature type="transmembrane region" description="Beta stranded" evidence="1">
    <location>
        <begin position="135"/>
        <end position="142"/>
    </location>
</feature>
<feature type="transmembrane region" description="Beta stranded" evidence="1">
    <location>
        <begin position="149"/>
        <end position="157"/>
    </location>
</feature>
<feature type="transmembrane region" description="Beta stranded" evidence="1">
    <location>
        <begin position="162"/>
        <end position="170"/>
    </location>
</feature>
<feature type="transmembrane region" description="Beta stranded" evidence="1">
    <location>
        <begin position="175"/>
        <end position="187"/>
    </location>
</feature>
<feature type="transmembrane region" description="Beta stranded" evidence="1">
    <location>
        <begin position="190"/>
        <end position="197"/>
    </location>
</feature>
<feature type="transmembrane region" description="Beta stranded" evidence="1">
    <location>
        <begin position="201"/>
        <end position="210"/>
    </location>
</feature>
<feature type="transmembrane region" description="Beta stranded" evidence="1">
    <location>
        <begin position="214"/>
        <end position="223"/>
    </location>
</feature>
<feature type="transmembrane region" description="Beta stranded" evidence="1">
    <location>
        <begin position="230"/>
        <end position="239"/>
    </location>
</feature>
<feature type="transmembrane region" description="Beta stranded" evidence="1">
    <location>
        <begin position="243"/>
        <end position="250"/>
    </location>
</feature>
<feature type="transmembrane region" description="Beta stranded" evidence="1">
    <location>
        <begin position="254"/>
        <end position="263"/>
    </location>
</feature>
<feature type="transmembrane region" description="Beta stranded" evidence="1">
    <location>
        <begin position="266"/>
        <end position="275"/>
    </location>
</feature>
<feature type="transmembrane region" description="Beta stranded" evidence="1">
    <location>
        <begin position="285"/>
        <end position="294"/>
    </location>
</feature>
<feature type="binding site" evidence="4">
    <location>
        <position position="24"/>
    </location>
    <ligand>
        <name>ATP</name>
        <dbReference type="ChEBI" id="CHEBI:30616"/>
    </ligand>
</feature>
<feature type="binding site" evidence="4">
    <location>
        <position position="32"/>
    </location>
    <ligand>
        <name>ATP</name>
        <dbReference type="ChEBI" id="CHEBI:30616"/>
    </ligand>
</feature>
<feature type="binding site" evidence="1">
    <location>
        <begin position="254"/>
        <end position="256"/>
    </location>
    <ligand>
        <name>NAD(+)</name>
        <dbReference type="ChEBI" id="CHEBI:57540"/>
    </ligand>
</feature>
<feature type="binding site" evidence="1">
    <location>
        <begin position="272"/>
        <end position="276"/>
    </location>
    <ligand>
        <name>NAD(+)</name>
        <dbReference type="ChEBI" id="CHEBI:57540"/>
    </ligand>
</feature>
<feature type="site" description="Involved in ceramide and phosphatidylcholine binding" evidence="2">
    <location>
        <position position="85"/>
    </location>
</feature>
<feature type="modified residue" description="N6-acetyllysine; alternate" evidence="1">
    <location>
        <position position="32"/>
    </location>
</feature>
<feature type="modified residue" description="N6-succinyllysine; alternate" evidence="3">
    <location>
        <position position="32"/>
    </location>
</feature>
<feature type="modified residue" description="N6-acetyllysine; alternate" evidence="3">
    <location>
        <position position="121"/>
    </location>
</feature>
<feature type="modified residue" description="Phosphoserine" evidence="1">
    <location>
        <position position="205"/>
    </location>
</feature>
<feature type="modified residue" description="Phosphoserine" evidence="1">
    <location>
        <position position="252"/>
    </location>
</feature>
<feature type="modified residue" description="N6-acetyllysine; alternate" evidence="1">
    <location>
        <position position="278"/>
    </location>
</feature>
<feature type="cross-link" description="Glycyl lysine isopeptide (Lys-Gly) (interchain with G-Cter in ubiquitin); alternate" evidence="2">
    <location>
        <position position="32"/>
    </location>
</feature>
<feature type="cross-link" description="Glycyl lysine isopeptide (Lys-Gly) (interchain with G-Cter in ubiquitin)" evidence="2">
    <location>
        <position position="65"/>
    </location>
</feature>
<feature type="cross-link" description="Glycyl lysine isopeptide (Lys-Gly) (interchain with G-Cter in ubiquitin)" evidence="2">
    <location>
        <position position="73"/>
    </location>
</feature>
<feature type="cross-link" description="Glycyl lysine isopeptide (Lys-Gly) (interchain with G-Cter in ubiquitin); alternate" evidence="2">
    <location>
        <position position="121"/>
    </location>
</feature>
<feature type="cross-link" description="Glycyl lysine isopeptide (Lys-Gly) (interchain with G-Cter in ubiquitin)" evidence="2">
    <location>
        <position position="122"/>
    </location>
</feature>
<feature type="cross-link" description="Glycyl lysine isopeptide (Lys-Gly) (interchain with G-Cter in ubiquitin)" evidence="2">
    <location>
        <position position="125"/>
    </location>
</feature>
<feature type="cross-link" description="Glycyl lysine isopeptide (Lys-Gly) (interchain with G-Cter in ubiquitin)" evidence="1">
    <location>
        <position position="173"/>
    </location>
</feature>
<feature type="cross-link" description="Glycyl lysine isopeptide (Lys-Gly) (interchain with G-Cter in ubiquitin); alternate" evidence="2">
    <location>
        <position position="278"/>
    </location>
</feature>
<feature type="cross-link" description="Glycyl lysine isopeptide (Lys-Gly) (interchain with G-Cter in ubiquitin)" evidence="2">
    <location>
        <position position="286"/>
    </location>
</feature>
<proteinExistence type="evidence at protein level"/>
<accession>P86223</accession>
<accession>A0A1U7R165</accession>